<accession>Q4JAY4</accession>
<comment type="function">
    <text evidence="1 4">DNA-dependent RNA polymerase (RNAP) catalyzes the transcription of DNA into RNA using the four ribonucleoside triphosphates as substrates.</text>
</comment>
<comment type="catalytic activity">
    <reaction evidence="1 4">
        <text>RNA(n) + a ribonucleoside 5'-triphosphate = RNA(n+1) + diphosphate</text>
        <dbReference type="Rhea" id="RHEA:21248"/>
        <dbReference type="Rhea" id="RHEA-COMP:14527"/>
        <dbReference type="Rhea" id="RHEA-COMP:17342"/>
        <dbReference type="ChEBI" id="CHEBI:33019"/>
        <dbReference type="ChEBI" id="CHEBI:61557"/>
        <dbReference type="ChEBI" id="CHEBI:140395"/>
        <dbReference type="EC" id="2.7.7.6"/>
    </reaction>
</comment>
<comment type="subunit">
    <text evidence="2 3 4 7 8 9">Part of the 13-subunit RNA polymerase complex.</text>
</comment>
<comment type="subcellular location">
    <subcellularLocation>
        <location evidence="1">Cytoplasm</location>
    </subcellularLocation>
</comment>
<comment type="PTM">
    <text evidence="4">This subunit is phosphorylated.</text>
</comment>
<comment type="similarity">
    <text evidence="6">Belongs to the archaeal Rpo8 RNA polymerase subunit family.</text>
</comment>
<comment type="sequence caution" evidence="6">
    <conflict type="erroneous initiation">
        <sequence resource="EMBL-CDS" id="AAY80045"/>
    </conflict>
    <text>Extended N-terminus.</text>
</comment>
<dbReference type="EC" id="2.7.7.6" evidence="1 4"/>
<dbReference type="EMBL" id="CP000077">
    <property type="protein sequence ID" value="AAY80045.1"/>
    <property type="status" value="ALT_INIT"/>
    <property type="molecule type" value="Genomic_DNA"/>
</dbReference>
<dbReference type="RefSeq" id="WP_048054424.1">
    <property type="nucleotide sequence ID" value="NC_007181.1"/>
</dbReference>
<dbReference type="PDB" id="7OK0">
    <property type="method" value="EM"/>
    <property type="resolution" value="2.90 A"/>
    <property type="chains" value="G=1-121"/>
</dbReference>
<dbReference type="PDB" id="7OQ4">
    <property type="method" value="EM"/>
    <property type="resolution" value="3.27 A"/>
    <property type="chains" value="G=1-121"/>
</dbReference>
<dbReference type="PDB" id="7OQY">
    <property type="method" value="EM"/>
    <property type="resolution" value="2.61 A"/>
    <property type="chains" value="G=1-121"/>
</dbReference>
<dbReference type="PDBsum" id="7OK0"/>
<dbReference type="PDBsum" id="7OQ4"/>
<dbReference type="PDBsum" id="7OQY"/>
<dbReference type="EMDB" id="EMD-12960"/>
<dbReference type="EMDB" id="EMD-13026"/>
<dbReference type="EMDB" id="EMD-13034"/>
<dbReference type="SMR" id="Q4JAY4"/>
<dbReference type="STRING" id="330779.Saci_0661"/>
<dbReference type="GeneID" id="14551180"/>
<dbReference type="KEGG" id="sai:Saci_0661"/>
<dbReference type="PATRIC" id="fig|330779.12.peg.631"/>
<dbReference type="eggNOG" id="arCOG04271">
    <property type="taxonomic scope" value="Archaea"/>
</dbReference>
<dbReference type="HOGENOM" id="CLU_136588_0_0_2"/>
<dbReference type="Proteomes" id="UP000001018">
    <property type="component" value="Chromosome"/>
</dbReference>
<dbReference type="GO" id="GO:0005737">
    <property type="term" value="C:cytoplasm"/>
    <property type="evidence" value="ECO:0007669"/>
    <property type="project" value="UniProtKB-SubCell"/>
</dbReference>
<dbReference type="GO" id="GO:0000428">
    <property type="term" value="C:DNA-directed RNA polymerase complex"/>
    <property type="evidence" value="ECO:0000314"/>
    <property type="project" value="UniProtKB"/>
</dbReference>
<dbReference type="GO" id="GO:0003899">
    <property type="term" value="F:DNA-directed RNA polymerase activity"/>
    <property type="evidence" value="ECO:0000314"/>
    <property type="project" value="UniProtKB"/>
</dbReference>
<dbReference type="GO" id="GO:0006351">
    <property type="term" value="P:DNA-templated transcription"/>
    <property type="evidence" value="ECO:0000314"/>
    <property type="project" value="UniProtKB"/>
</dbReference>
<dbReference type="Gene3D" id="2.40.50.140">
    <property type="entry name" value="Nucleic acid-binding proteins"/>
    <property type="match status" value="1"/>
</dbReference>
<dbReference type="HAMAP" id="MF_00866">
    <property type="entry name" value="RNApol_arch_Rpo8"/>
    <property type="match status" value="1"/>
</dbReference>
<dbReference type="InterPro" id="IPR012340">
    <property type="entry name" value="NA-bd_OB-fold"/>
</dbReference>
<dbReference type="InterPro" id="IPR031555">
    <property type="entry name" value="RNA_pol_Rpo8"/>
</dbReference>
<dbReference type="NCBIfam" id="NF011549">
    <property type="entry name" value="PRK14980.1"/>
    <property type="match status" value="1"/>
</dbReference>
<dbReference type="Pfam" id="PF16992">
    <property type="entry name" value="RNA_pol_RpbG"/>
    <property type="match status" value="1"/>
</dbReference>
<feature type="chain" id="PRO_0000453720" description="DNA-directed RNA polymerase subunit Rpo8">
    <location>
        <begin position="1"/>
        <end position="121"/>
    </location>
</feature>
<feature type="sequence conflict" description="In Ref. 2; no nucleotide entry." evidence="6" ref="2">
    <original>F</original>
    <variation>L</variation>
    <location>
        <position position="82"/>
    </location>
</feature>
<feature type="sequence conflict" description="In Ref. 2; no nucleotide entry." evidence="6" ref="2">
    <original>SKNG</original>
    <variation>AKMR</variation>
    <location>
        <begin position="97"/>
        <end position="100"/>
    </location>
</feature>
<feature type="sequence conflict" description="In Ref. 2; no nucleotide entry." evidence="6" ref="2">
    <original>D</original>
    <variation>V</variation>
    <location>
        <position position="111"/>
    </location>
</feature>
<feature type="sequence conflict" description="In Ref. 2; no nucleotide entry." evidence="6" ref="2">
    <original>YCVKKKA</original>
    <variation>MRKKSI</variation>
    <location>
        <begin position="115"/>
        <end position="121"/>
    </location>
</feature>
<feature type="strand" evidence="11">
    <location>
        <begin position="2"/>
        <end position="12"/>
    </location>
</feature>
<feature type="strand" evidence="11">
    <location>
        <begin position="15"/>
        <end position="18"/>
    </location>
</feature>
<feature type="strand" evidence="11">
    <location>
        <begin position="20"/>
        <end position="27"/>
    </location>
</feature>
<feature type="strand" evidence="11">
    <location>
        <begin position="31"/>
        <end position="36"/>
    </location>
</feature>
<feature type="turn" evidence="11">
    <location>
        <begin position="38"/>
        <end position="40"/>
    </location>
</feature>
<feature type="strand" evidence="11">
    <location>
        <begin position="48"/>
        <end position="56"/>
    </location>
</feature>
<feature type="strand" evidence="11">
    <location>
        <begin position="64"/>
        <end position="76"/>
    </location>
</feature>
<feature type="strand" evidence="10">
    <location>
        <begin position="78"/>
        <end position="80"/>
    </location>
</feature>
<feature type="strand" evidence="11">
    <location>
        <begin position="82"/>
        <end position="88"/>
    </location>
</feature>
<feature type="strand" evidence="11">
    <location>
        <begin position="91"/>
        <end position="99"/>
    </location>
</feature>
<feature type="turn" evidence="11">
    <location>
        <begin position="102"/>
        <end position="105"/>
    </location>
</feature>
<feature type="strand" evidence="11">
    <location>
        <begin position="111"/>
        <end position="120"/>
    </location>
</feature>
<protein>
    <recommendedName>
        <fullName evidence="1">DNA-directed RNA polymerase subunit Rpo8</fullName>
        <ecNumber evidence="1 4">2.7.7.6</ecNumber>
    </recommendedName>
    <alternativeName>
        <fullName evidence="1 5">DNA-directed RNA polymerase, subunit G</fullName>
    </alternativeName>
</protein>
<evidence type="ECO:0000255" key="1">
    <source>
        <dbReference type="HAMAP-Rule" id="MF_00866"/>
    </source>
</evidence>
<evidence type="ECO:0000269" key="2">
    <source>
    </source>
</evidence>
<evidence type="ECO:0000269" key="3">
    <source>
    </source>
</evidence>
<evidence type="ECO:0000269" key="4">
    <source ref="2"/>
</evidence>
<evidence type="ECO:0000303" key="5">
    <source>
    </source>
</evidence>
<evidence type="ECO:0000305" key="6"/>
<evidence type="ECO:0000312" key="7">
    <source>
        <dbReference type="PDB" id="7OK0"/>
    </source>
</evidence>
<evidence type="ECO:0000312" key="8">
    <source>
        <dbReference type="PDB" id="7OQ4"/>
    </source>
</evidence>
<evidence type="ECO:0000312" key="9">
    <source>
        <dbReference type="PDB" id="7OQY"/>
    </source>
</evidence>
<evidence type="ECO:0007829" key="10">
    <source>
        <dbReference type="PDB" id="7OQ4"/>
    </source>
</evidence>
<evidence type="ECO:0007829" key="11">
    <source>
        <dbReference type="PDB" id="7OQY"/>
    </source>
</evidence>
<sequence>MMQGTCKISSIEKGALKNLYVVKMDCDNDLKIEFDITKELSIFSKDEEVTFIISREKPEYSEKDFCAHGYLFLERQQEDGSFIDEISLYGLIVKILSKNGLINSKLFKMMDHVYYCVKKKA</sequence>
<proteinExistence type="evidence at protein level"/>
<reference key="1">
    <citation type="journal article" date="2005" name="J. Bacteriol.">
        <title>The genome of Sulfolobus acidocaldarius, a model organism of the Crenarchaeota.</title>
        <authorList>
            <person name="Chen L."/>
            <person name="Bruegger K."/>
            <person name="Skovgaard M."/>
            <person name="Redder P."/>
            <person name="She Q."/>
            <person name="Torarinsson E."/>
            <person name="Greve B."/>
            <person name="Awayez M."/>
            <person name="Zibat A."/>
            <person name="Klenk H.-P."/>
            <person name="Garrett R.A."/>
        </authorList>
    </citation>
    <scope>NUCLEOTIDE SEQUENCE [LARGE SCALE GENOMIC DNA]</scope>
    <source>
        <strain>ATCC 33909 / DSM 639 / JCM 8929 / NBRC 15157 / NCIMB 11770</strain>
    </source>
</reference>
<reference key="2">
    <citation type="journal article" date="1994" name="Syst. Appl. Microbiol.">
        <title>Structure and Function of the DNA-Dependent RNA Polymerase of Sulfolobus.</title>
        <authorList>
            <person name="Lanzendorfer M."/>
            <person name="Langer D."/>
            <person name="Hain J."/>
            <person name="Klenk H.-P."/>
            <person name="Holz I."/>
            <person name="Arnold-Ammer I."/>
            <person name="Zillig W."/>
        </authorList>
    </citation>
    <scope>NUCLEOTIDE SEQUENCE [GENOMIC DNA]</scope>
    <scope>FUNCTION</scope>
    <scope>CATALYTIC ACTIVITY</scope>
    <scope>SUBUNIT</scope>
    <scope>PHOSPHORYLATION</scope>
    <source>
        <strain>ATCC 33909 / DSM 639 / JCM 8929 / NBRC 15157 / NCIMB 11770</strain>
    </source>
</reference>
<reference key="3">
    <citation type="journal article" date="1992" name="Proc. Natl. Acad. Sci. U.S.A.">
        <title>Component H of the DNA-dependent RNA polymerases of Archaea is homologous to a subunit shared by the three eucaryal nuclear RNA polymerases.</title>
        <authorList>
            <person name="Klenk H.-P."/>
            <person name="Palm P."/>
            <person name="Lottspeich F."/>
            <person name="Zillig W."/>
        </authorList>
    </citation>
    <scope>SUBUNIT</scope>
    <source>
        <strain>ATCC 33909 / DSM 639 / JCM 8929 / NBRC 15157 / NCIMB 11770</strain>
    </source>
</reference>
<reference evidence="7 8 9" key="4">
    <citation type="journal article" date="2021" name="Nat. Commun.">
        <title>Structural basis of RNA polymerase inhibition by viral and host factors.</title>
        <authorList>
            <person name="Pilotto S."/>
            <person name="Fouqueau T."/>
            <person name="Lukoyanova N."/>
            <person name="Sheppard C."/>
            <person name="Lucas-Staat S."/>
            <person name="Diaz-Santin L.M."/>
            <person name="Matelska D."/>
            <person name="Prangishvili D."/>
            <person name="Cheung A.C.M."/>
            <person name="Werner F."/>
        </authorList>
    </citation>
    <scope>STRUCTURE BY ELECTRON MICROSCOPY (2.61 ANGSTROMS) OF RNAP WITH AND WITHOUT INHIBITORS</scope>
    <scope>SUBUNIT</scope>
    <source>
        <strain>ATCC 33909 / DSM 639 / JCM 8929 / NBRC 15157 / NCIMB 11770</strain>
    </source>
</reference>
<keyword id="KW-0002">3D-structure</keyword>
<keyword id="KW-0963">Cytoplasm</keyword>
<keyword id="KW-0240">DNA-directed RNA polymerase</keyword>
<keyword id="KW-0548">Nucleotidyltransferase</keyword>
<keyword id="KW-0597">Phosphoprotein</keyword>
<keyword id="KW-1185">Reference proteome</keyword>
<keyword id="KW-0804">Transcription</keyword>
<keyword id="KW-0808">Transferase</keyword>
<gene>
    <name evidence="1" type="primary">rpo8</name>
    <name evidence="1" type="synonym">rpoG</name>
    <name type="ordered locus">Saci_0661</name>
</gene>
<organism>
    <name type="scientific">Sulfolobus acidocaldarius (strain ATCC 33909 / DSM 639 / JCM 8929 / NBRC 15157 / NCIMB 11770)</name>
    <dbReference type="NCBI Taxonomy" id="330779"/>
    <lineage>
        <taxon>Archaea</taxon>
        <taxon>Thermoproteota</taxon>
        <taxon>Thermoprotei</taxon>
        <taxon>Sulfolobales</taxon>
        <taxon>Sulfolobaceae</taxon>
        <taxon>Sulfolobus</taxon>
    </lineage>
</organism>
<name>RPO8_SULAC</name>